<protein>
    <recommendedName>
        <fullName evidence="1">Holliday junction branch migration complex subunit RuvB</fullName>
        <ecNumber evidence="1">3.6.4.-</ecNumber>
    </recommendedName>
</protein>
<gene>
    <name evidence="1" type="primary">ruvB</name>
    <name type="ordered locus">CMM_1814</name>
</gene>
<feature type="chain" id="PRO_1000057140" description="Holliday junction branch migration complex subunit RuvB">
    <location>
        <begin position="1"/>
        <end position="359"/>
    </location>
</feature>
<feature type="region of interest" description="Large ATPase domain (RuvB-L)" evidence="1">
    <location>
        <begin position="1"/>
        <end position="187"/>
    </location>
</feature>
<feature type="region of interest" description="Small ATPAse domain (RuvB-S)" evidence="1">
    <location>
        <begin position="188"/>
        <end position="257"/>
    </location>
</feature>
<feature type="region of interest" description="Head domain (RuvB-H)" evidence="1">
    <location>
        <begin position="260"/>
        <end position="359"/>
    </location>
</feature>
<feature type="binding site" evidence="1">
    <location>
        <position position="26"/>
    </location>
    <ligand>
        <name>ATP</name>
        <dbReference type="ChEBI" id="CHEBI:30616"/>
    </ligand>
</feature>
<feature type="binding site" evidence="1">
    <location>
        <position position="27"/>
    </location>
    <ligand>
        <name>ATP</name>
        <dbReference type="ChEBI" id="CHEBI:30616"/>
    </ligand>
</feature>
<feature type="binding site" evidence="1">
    <location>
        <position position="68"/>
    </location>
    <ligand>
        <name>ATP</name>
        <dbReference type="ChEBI" id="CHEBI:30616"/>
    </ligand>
</feature>
<feature type="binding site" evidence="1">
    <location>
        <position position="71"/>
    </location>
    <ligand>
        <name>ATP</name>
        <dbReference type="ChEBI" id="CHEBI:30616"/>
    </ligand>
</feature>
<feature type="binding site" evidence="1">
    <location>
        <position position="72"/>
    </location>
    <ligand>
        <name>ATP</name>
        <dbReference type="ChEBI" id="CHEBI:30616"/>
    </ligand>
</feature>
<feature type="binding site" evidence="1">
    <location>
        <position position="72"/>
    </location>
    <ligand>
        <name>Mg(2+)</name>
        <dbReference type="ChEBI" id="CHEBI:18420"/>
    </ligand>
</feature>
<feature type="binding site" evidence="1">
    <location>
        <position position="73"/>
    </location>
    <ligand>
        <name>ATP</name>
        <dbReference type="ChEBI" id="CHEBI:30616"/>
    </ligand>
</feature>
<feature type="binding site" evidence="1">
    <location>
        <begin position="134"/>
        <end position="136"/>
    </location>
    <ligand>
        <name>ATP</name>
        <dbReference type="ChEBI" id="CHEBI:30616"/>
    </ligand>
</feature>
<feature type="binding site" evidence="1">
    <location>
        <position position="177"/>
    </location>
    <ligand>
        <name>ATP</name>
        <dbReference type="ChEBI" id="CHEBI:30616"/>
    </ligand>
</feature>
<feature type="binding site" evidence="1">
    <location>
        <position position="187"/>
    </location>
    <ligand>
        <name>ATP</name>
        <dbReference type="ChEBI" id="CHEBI:30616"/>
    </ligand>
</feature>
<feature type="binding site" evidence="1">
    <location>
        <position position="224"/>
    </location>
    <ligand>
        <name>ATP</name>
        <dbReference type="ChEBI" id="CHEBI:30616"/>
    </ligand>
</feature>
<feature type="binding site" evidence="1">
    <location>
        <position position="315"/>
    </location>
    <ligand>
        <name>DNA</name>
        <dbReference type="ChEBI" id="CHEBI:16991"/>
    </ligand>
</feature>
<feature type="binding site" evidence="1">
    <location>
        <position position="320"/>
    </location>
    <ligand>
        <name>DNA</name>
        <dbReference type="ChEBI" id="CHEBI:16991"/>
    </ligand>
</feature>
<accession>A5CS06</accession>
<dbReference type="EC" id="3.6.4.-" evidence="1"/>
<dbReference type="EMBL" id="AM711867">
    <property type="protein sequence ID" value="CAN01869.1"/>
    <property type="molecule type" value="Genomic_DNA"/>
</dbReference>
<dbReference type="RefSeq" id="WP_012038501.1">
    <property type="nucleotide sequence ID" value="NC_009480.1"/>
</dbReference>
<dbReference type="SMR" id="A5CS06"/>
<dbReference type="KEGG" id="cmi:CMM_1814"/>
<dbReference type="eggNOG" id="COG2255">
    <property type="taxonomic scope" value="Bacteria"/>
</dbReference>
<dbReference type="HOGENOM" id="CLU_055599_1_0_11"/>
<dbReference type="OrthoDB" id="9804478at2"/>
<dbReference type="Proteomes" id="UP000001564">
    <property type="component" value="Chromosome"/>
</dbReference>
<dbReference type="GO" id="GO:0005737">
    <property type="term" value="C:cytoplasm"/>
    <property type="evidence" value="ECO:0007669"/>
    <property type="project" value="UniProtKB-SubCell"/>
</dbReference>
<dbReference type="GO" id="GO:0048476">
    <property type="term" value="C:Holliday junction resolvase complex"/>
    <property type="evidence" value="ECO:0007669"/>
    <property type="project" value="UniProtKB-UniRule"/>
</dbReference>
<dbReference type="GO" id="GO:0005524">
    <property type="term" value="F:ATP binding"/>
    <property type="evidence" value="ECO:0007669"/>
    <property type="project" value="UniProtKB-UniRule"/>
</dbReference>
<dbReference type="GO" id="GO:0016887">
    <property type="term" value="F:ATP hydrolysis activity"/>
    <property type="evidence" value="ECO:0007669"/>
    <property type="project" value="InterPro"/>
</dbReference>
<dbReference type="GO" id="GO:0000400">
    <property type="term" value="F:four-way junction DNA binding"/>
    <property type="evidence" value="ECO:0007669"/>
    <property type="project" value="UniProtKB-UniRule"/>
</dbReference>
<dbReference type="GO" id="GO:0009378">
    <property type="term" value="F:four-way junction helicase activity"/>
    <property type="evidence" value="ECO:0007669"/>
    <property type="project" value="InterPro"/>
</dbReference>
<dbReference type="GO" id="GO:0006310">
    <property type="term" value="P:DNA recombination"/>
    <property type="evidence" value="ECO:0007669"/>
    <property type="project" value="UniProtKB-UniRule"/>
</dbReference>
<dbReference type="GO" id="GO:0006281">
    <property type="term" value="P:DNA repair"/>
    <property type="evidence" value="ECO:0007669"/>
    <property type="project" value="UniProtKB-UniRule"/>
</dbReference>
<dbReference type="CDD" id="cd00009">
    <property type="entry name" value="AAA"/>
    <property type="match status" value="1"/>
</dbReference>
<dbReference type="Gene3D" id="1.10.8.60">
    <property type="match status" value="1"/>
</dbReference>
<dbReference type="Gene3D" id="3.40.50.300">
    <property type="entry name" value="P-loop containing nucleotide triphosphate hydrolases"/>
    <property type="match status" value="1"/>
</dbReference>
<dbReference type="Gene3D" id="1.10.10.10">
    <property type="entry name" value="Winged helix-like DNA-binding domain superfamily/Winged helix DNA-binding domain"/>
    <property type="match status" value="1"/>
</dbReference>
<dbReference type="HAMAP" id="MF_00016">
    <property type="entry name" value="DNA_HJ_migration_RuvB"/>
    <property type="match status" value="1"/>
</dbReference>
<dbReference type="InterPro" id="IPR003593">
    <property type="entry name" value="AAA+_ATPase"/>
</dbReference>
<dbReference type="InterPro" id="IPR041445">
    <property type="entry name" value="AAA_lid_4"/>
</dbReference>
<dbReference type="InterPro" id="IPR004605">
    <property type="entry name" value="DNA_helicase_Holl-junc_RuvB"/>
</dbReference>
<dbReference type="InterPro" id="IPR027417">
    <property type="entry name" value="P-loop_NTPase"/>
</dbReference>
<dbReference type="InterPro" id="IPR008824">
    <property type="entry name" value="RuvB-like_N"/>
</dbReference>
<dbReference type="InterPro" id="IPR008823">
    <property type="entry name" value="RuvB_C"/>
</dbReference>
<dbReference type="InterPro" id="IPR036388">
    <property type="entry name" value="WH-like_DNA-bd_sf"/>
</dbReference>
<dbReference type="InterPro" id="IPR036390">
    <property type="entry name" value="WH_DNA-bd_sf"/>
</dbReference>
<dbReference type="NCBIfam" id="NF000868">
    <property type="entry name" value="PRK00080.1"/>
    <property type="match status" value="1"/>
</dbReference>
<dbReference type="NCBIfam" id="TIGR00635">
    <property type="entry name" value="ruvB"/>
    <property type="match status" value="1"/>
</dbReference>
<dbReference type="PANTHER" id="PTHR42848">
    <property type="match status" value="1"/>
</dbReference>
<dbReference type="PANTHER" id="PTHR42848:SF1">
    <property type="entry name" value="HOLLIDAY JUNCTION BRANCH MIGRATION COMPLEX SUBUNIT RUVB"/>
    <property type="match status" value="1"/>
</dbReference>
<dbReference type="Pfam" id="PF17864">
    <property type="entry name" value="AAA_lid_4"/>
    <property type="match status" value="1"/>
</dbReference>
<dbReference type="Pfam" id="PF05491">
    <property type="entry name" value="RuvB_C"/>
    <property type="match status" value="1"/>
</dbReference>
<dbReference type="Pfam" id="PF05496">
    <property type="entry name" value="RuvB_N"/>
    <property type="match status" value="1"/>
</dbReference>
<dbReference type="SMART" id="SM00382">
    <property type="entry name" value="AAA"/>
    <property type="match status" value="1"/>
</dbReference>
<dbReference type="SUPFAM" id="SSF52540">
    <property type="entry name" value="P-loop containing nucleoside triphosphate hydrolases"/>
    <property type="match status" value="1"/>
</dbReference>
<dbReference type="SUPFAM" id="SSF46785">
    <property type="entry name" value="Winged helix' DNA-binding domain"/>
    <property type="match status" value="1"/>
</dbReference>
<comment type="function">
    <text evidence="1">The RuvA-RuvB-RuvC complex processes Holliday junction (HJ) DNA during genetic recombination and DNA repair, while the RuvA-RuvB complex plays an important role in the rescue of blocked DNA replication forks via replication fork reversal (RFR). RuvA specifically binds to HJ cruciform DNA, conferring on it an open structure. The RuvB hexamer acts as an ATP-dependent pump, pulling dsDNA into and through the RuvAB complex. RuvB forms 2 homohexamers on either side of HJ DNA bound by 1 or 2 RuvA tetramers; 4 subunits per hexamer contact DNA at a time. Coordinated motions by a converter formed by DNA-disengaged RuvB subunits stimulates ATP hydrolysis and nucleotide exchange. Immobilization of the converter enables RuvB to convert the ATP-contained energy into a lever motion, pulling 2 nucleotides of DNA out of the RuvA tetramer per ATP hydrolyzed, thus driving DNA branch migration. The RuvB motors rotate together with the DNA substrate, which together with the progressing nucleotide cycle form the mechanistic basis for DNA recombination by continuous HJ branch migration. Branch migration allows RuvC to scan DNA until it finds its consensus sequence, where it cleaves and resolves cruciform DNA.</text>
</comment>
<comment type="catalytic activity">
    <reaction evidence="1">
        <text>ATP + H2O = ADP + phosphate + H(+)</text>
        <dbReference type="Rhea" id="RHEA:13065"/>
        <dbReference type="ChEBI" id="CHEBI:15377"/>
        <dbReference type="ChEBI" id="CHEBI:15378"/>
        <dbReference type="ChEBI" id="CHEBI:30616"/>
        <dbReference type="ChEBI" id="CHEBI:43474"/>
        <dbReference type="ChEBI" id="CHEBI:456216"/>
    </reaction>
</comment>
<comment type="subunit">
    <text evidence="1">Homohexamer. Forms an RuvA(8)-RuvB(12)-Holliday junction (HJ) complex. HJ DNA is sandwiched between 2 RuvA tetramers; dsDNA enters through RuvA and exits via RuvB. An RuvB hexamer assembles on each DNA strand where it exits the tetramer. Each RuvB hexamer is contacted by two RuvA subunits (via domain III) on 2 adjacent RuvB subunits; this complex drives branch migration. In the full resolvosome a probable DNA-RuvA(4)-RuvB(12)-RuvC(2) complex forms which resolves the HJ.</text>
</comment>
<comment type="subcellular location">
    <subcellularLocation>
        <location evidence="1">Cytoplasm</location>
    </subcellularLocation>
</comment>
<comment type="domain">
    <text evidence="1">Has 3 domains, the large (RuvB-L) and small ATPase (RuvB-S) domains and the C-terminal head (RuvB-H) domain. The head domain binds DNA, while the ATPase domains jointly bind ATP, ADP or are empty depending on the state of the subunit in the translocation cycle. During a single DNA translocation step the structure of each domain remains the same, but their relative positions change.</text>
</comment>
<comment type="similarity">
    <text evidence="1">Belongs to the RuvB family.</text>
</comment>
<organism>
    <name type="scientific">Clavibacter michiganensis subsp. michiganensis (strain NCPPB 382)</name>
    <dbReference type="NCBI Taxonomy" id="443906"/>
    <lineage>
        <taxon>Bacteria</taxon>
        <taxon>Bacillati</taxon>
        <taxon>Actinomycetota</taxon>
        <taxon>Actinomycetes</taxon>
        <taxon>Micrococcales</taxon>
        <taxon>Microbacteriaceae</taxon>
        <taxon>Clavibacter</taxon>
    </lineage>
</organism>
<reference key="1">
    <citation type="journal article" date="2008" name="J. Bacteriol.">
        <title>The genome sequence of the tomato-pathogenic actinomycete Clavibacter michiganensis subsp. michiganensis NCPPB382 reveals a large island involved in pathogenicity.</title>
        <authorList>
            <person name="Gartemann K.-H."/>
            <person name="Abt B."/>
            <person name="Bekel T."/>
            <person name="Burger A."/>
            <person name="Engemann J."/>
            <person name="Fluegel M."/>
            <person name="Gaigalat L."/>
            <person name="Goesmann A."/>
            <person name="Graefen I."/>
            <person name="Kalinowski J."/>
            <person name="Kaup O."/>
            <person name="Kirchner O."/>
            <person name="Krause L."/>
            <person name="Linke B."/>
            <person name="McHardy A."/>
            <person name="Meyer F."/>
            <person name="Pohle S."/>
            <person name="Rueckert C."/>
            <person name="Schneiker S."/>
            <person name="Zellermann E.-M."/>
            <person name="Puehler A."/>
            <person name="Eichenlaub R."/>
            <person name="Kaiser O."/>
            <person name="Bartels D."/>
        </authorList>
    </citation>
    <scope>NUCLEOTIDE SEQUENCE [LARGE SCALE GENOMIC DNA]</scope>
    <source>
        <strain>NCPPB 382</strain>
    </source>
</reference>
<keyword id="KW-0067">ATP-binding</keyword>
<keyword id="KW-0963">Cytoplasm</keyword>
<keyword id="KW-0227">DNA damage</keyword>
<keyword id="KW-0233">DNA recombination</keyword>
<keyword id="KW-0234">DNA repair</keyword>
<keyword id="KW-0238">DNA-binding</keyword>
<keyword id="KW-0378">Hydrolase</keyword>
<keyword id="KW-0547">Nucleotide-binding</keyword>
<sequence>MSGLEHGDASSPVPESDAELAFEGALRPRSLSEFVGQVKVRGQLELLLTAAAMQNRSPDHILLAGPPGLGKTTLAMIVAEESRRPLRLTSGPAIQHAGDLAAVLSALVPGEILFVDEIHRMARSAEEMLYLAMEDYRIDIMVGKGAGATSIPLELSPFTLVGATTRSGMLPSPLRDRFGFTAHLEFYETHELEQVIERAARMLHLEIEHEAVAEIAGRCRGTPRIANRLLRRVRDYALVHGTEAGLESVRAALDLYDVDPLGLDRLDRAVMRGILTRFGGGPVGLNTLAVSVGEEAETIESVVEPFLVRIGLVTRTPRGRVATPAAWEHFGLEAPAAPGAPARASGPASVAGALFGDEL</sequence>
<name>RUVB_CLAM3</name>
<proteinExistence type="inferred from homology"/>
<evidence type="ECO:0000255" key="1">
    <source>
        <dbReference type="HAMAP-Rule" id="MF_00016"/>
    </source>
</evidence>